<dbReference type="EMBL" id="CP001322">
    <property type="protein sequence ID" value="ACL06327.1"/>
    <property type="molecule type" value="Genomic_DNA"/>
</dbReference>
<dbReference type="RefSeq" id="WP_015949366.1">
    <property type="nucleotide sequence ID" value="NC_011768.1"/>
</dbReference>
<dbReference type="SMR" id="B8FNP6"/>
<dbReference type="KEGG" id="dal:Dalk_4649"/>
<dbReference type="eggNOG" id="COG0228">
    <property type="taxonomic scope" value="Bacteria"/>
</dbReference>
<dbReference type="HOGENOM" id="CLU_100590_5_0_7"/>
<dbReference type="Proteomes" id="UP000000739">
    <property type="component" value="Chromosome"/>
</dbReference>
<dbReference type="GO" id="GO:0005737">
    <property type="term" value="C:cytoplasm"/>
    <property type="evidence" value="ECO:0007669"/>
    <property type="project" value="UniProtKB-ARBA"/>
</dbReference>
<dbReference type="GO" id="GO:0015935">
    <property type="term" value="C:small ribosomal subunit"/>
    <property type="evidence" value="ECO:0007669"/>
    <property type="project" value="TreeGrafter"/>
</dbReference>
<dbReference type="GO" id="GO:0003735">
    <property type="term" value="F:structural constituent of ribosome"/>
    <property type="evidence" value="ECO:0007669"/>
    <property type="project" value="InterPro"/>
</dbReference>
<dbReference type="GO" id="GO:0006412">
    <property type="term" value="P:translation"/>
    <property type="evidence" value="ECO:0007669"/>
    <property type="project" value="UniProtKB-UniRule"/>
</dbReference>
<dbReference type="Gene3D" id="3.30.1320.10">
    <property type="match status" value="1"/>
</dbReference>
<dbReference type="HAMAP" id="MF_00385">
    <property type="entry name" value="Ribosomal_bS16"/>
    <property type="match status" value="1"/>
</dbReference>
<dbReference type="InterPro" id="IPR000307">
    <property type="entry name" value="Ribosomal_bS16"/>
</dbReference>
<dbReference type="InterPro" id="IPR020592">
    <property type="entry name" value="Ribosomal_bS16_CS"/>
</dbReference>
<dbReference type="InterPro" id="IPR023803">
    <property type="entry name" value="Ribosomal_bS16_dom_sf"/>
</dbReference>
<dbReference type="NCBIfam" id="TIGR00002">
    <property type="entry name" value="S16"/>
    <property type="match status" value="1"/>
</dbReference>
<dbReference type="PANTHER" id="PTHR12919">
    <property type="entry name" value="30S RIBOSOMAL PROTEIN S16"/>
    <property type="match status" value="1"/>
</dbReference>
<dbReference type="PANTHER" id="PTHR12919:SF20">
    <property type="entry name" value="SMALL RIBOSOMAL SUBUNIT PROTEIN BS16M"/>
    <property type="match status" value="1"/>
</dbReference>
<dbReference type="Pfam" id="PF00886">
    <property type="entry name" value="Ribosomal_S16"/>
    <property type="match status" value="1"/>
</dbReference>
<dbReference type="SUPFAM" id="SSF54565">
    <property type="entry name" value="Ribosomal protein S16"/>
    <property type="match status" value="1"/>
</dbReference>
<dbReference type="PROSITE" id="PS00732">
    <property type="entry name" value="RIBOSOMAL_S16"/>
    <property type="match status" value="1"/>
</dbReference>
<accession>B8FNP6</accession>
<reference key="1">
    <citation type="journal article" date="2012" name="Environ. Microbiol.">
        <title>The genome sequence of Desulfatibacillum alkenivorans AK-01: a blueprint for anaerobic alkane oxidation.</title>
        <authorList>
            <person name="Callaghan A.V."/>
            <person name="Morris B.E."/>
            <person name="Pereira I.A."/>
            <person name="McInerney M.J."/>
            <person name="Austin R.N."/>
            <person name="Groves J.T."/>
            <person name="Kukor J.J."/>
            <person name="Suflita J.M."/>
            <person name="Young L.Y."/>
            <person name="Zylstra G.J."/>
            <person name="Wawrik B."/>
        </authorList>
    </citation>
    <scope>NUCLEOTIDE SEQUENCE [LARGE SCALE GENOMIC DNA]</scope>
    <source>
        <strain>AK-01</strain>
    </source>
</reference>
<name>RS16_DESAL</name>
<organism>
    <name type="scientific">Desulfatibacillum aliphaticivorans</name>
    <dbReference type="NCBI Taxonomy" id="218208"/>
    <lineage>
        <taxon>Bacteria</taxon>
        <taxon>Pseudomonadati</taxon>
        <taxon>Thermodesulfobacteriota</taxon>
        <taxon>Desulfobacteria</taxon>
        <taxon>Desulfobacterales</taxon>
        <taxon>Desulfatibacillaceae</taxon>
        <taxon>Desulfatibacillum</taxon>
    </lineage>
</organism>
<protein>
    <recommendedName>
        <fullName evidence="1">Small ribosomal subunit protein bS16</fullName>
    </recommendedName>
    <alternativeName>
        <fullName evidence="2">30S ribosomal protein S16</fullName>
    </alternativeName>
</protein>
<evidence type="ECO:0000255" key="1">
    <source>
        <dbReference type="HAMAP-Rule" id="MF_00385"/>
    </source>
</evidence>
<evidence type="ECO:0000305" key="2"/>
<gene>
    <name evidence="1" type="primary">rpsP</name>
    <name type="ordered locus">Dalk_4649</name>
</gene>
<keyword id="KW-1185">Reference proteome</keyword>
<keyword id="KW-0687">Ribonucleoprotein</keyword>
<keyword id="KW-0689">Ribosomal protein</keyword>
<proteinExistence type="inferred from homology"/>
<sequence>MAVKIRLARHGAKKRPFYRIVVTDSESPRDGRFIEIVGTYNPVAEPAQIDLKDERIKHWMESGALPTHTVRNILKNQGFFSEAPQEA</sequence>
<feature type="chain" id="PRO_1000196384" description="Small ribosomal subunit protein bS16">
    <location>
        <begin position="1"/>
        <end position="87"/>
    </location>
</feature>
<comment type="similarity">
    <text evidence="1">Belongs to the bacterial ribosomal protein bS16 family.</text>
</comment>